<sequence length="358" mass="38860">MAKVAILGAGNLALTLAGDLARRLGQTPSIWAPISNRSSFNDVRCLGSLELVGPDYGGDFQPRLEDDLGTAISGAAFIFLTVPTLGQQGILRELAKFNLSNSVLVALPGSATSLACKQTLVPTFAPIAVIESTTSPYACRRVKARVLMLGVKATFEVATTQPLSEEVKGRFEVLFPNPPQWYQHPASIFFSNTNPVAHPAGILAARDSIEQGILPVPKFYRQFVPQAITRVIAIDEERLSIVDALGLESETDFSYSKKWYGGHACNAREFYETYEGYAEIETPKTMNHRYLTEDVKHILVLWVEIAEAIGVQVPEMKSVVQEASDVLNENLLRTGRGLSSLNLGGANANAIVRALNGV</sequence>
<reference key="1">
    <citation type="submission" date="1997-02" db="EMBL/GenBank/DDBJ databases">
        <authorList>
            <person name="Otten L."/>
            <person name="de Ruffray P."/>
        </authorList>
    </citation>
    <scope>NUCLEOTIDE SEQUENCE [GENOMIC DNA]</scope>
    <source>
        <strain>CG474</strain>
    </source>
</reference>
<protein>
    <recommendedName>
        <fullName>Protein ocs</fullName>
    </recommendedName>
    <domain>
        <recommendedName>
            <fullName>D-lysopine dehydrogenase</fullName>
            <ecNumber>1.5.1.16</ecNumber>
        </recommendedName>
        <alternativeName>
            <fullName>Lysopine synthase</fullName>
        </alternativeName>
    </domain>
    <domain>
        <recommendedName>
            <fullName>D-octopine dehydrogenase</fullName>
            <ecNumber>1.5.1.11</ecNumber>
        </recommendedName>
        <alternativeName>
            <fullName>Octopine synthase</fullName>
        </alternativeName>
    </domain>
</protein>
<keyword id="KW-0192">Crown gall tumor</keyword>
<keyword id="KW-0520">NAD</keyword>
<keyword id="KW-0521">NADP</keyword>
<keyword id="KW-0560">Oxidoreductase</keyword>
<keyword id="KW-0614">Plasmid</keyword>
<proteinExistence type="inferred from homology"/>
<gene>
    <name type="primary">ocs</name>
</gene>
<evidence type="ECO:0000305" key="1"/>
<comment type="function">
    <text>Reductive condensation of pyruvate and arginine, lysine, histidine, or octopine to form octopine, lysopine, histopine, or octopinic acid, respectively. NADPH is the preferred cofactor, but NADH can also be used.</text>
</comment>
<comment type="catalytic activity">
    <reaction>
        <text>D-octopine + NAD(+) + H2O = L-arginine + pyruvate + NADH + H(+)</text>
        <dbReference type="Rhea" id="RHEA:16285"/>
        <dbReference type="ChEBI" id="CHEBI:15361"/>
        <dbReference type="ChEBI" id="CHEBI:15377"/>
        <dbReference type="ChEBI" id="CHEBI:15378"/>
        <dbReference type="ChEBI" id="CHEBI:32682"/>
        <dbReference type="ChEBI" id="CHEBI:57520"/>
        <dbReference type="ChEBI" id="CHEBI:57540"/>
        <dbReference type="ChEBI" id="CHEBI:57945"/>
        <dbReference type="EC" id="1.5.1.11"/>
    </reaction>
</comment>
<comment type="catalytic activity">
    <reaction>
        <text>D-lysopine + NADP(+) + H2O = L-lysine + pyruvate + NADPH + H(+)</text>
        <dbReference type="Rhea" id="RHEA:17625"/>
        <dbReference type="ChEBI" id="CHEBI:15361"/>
        <dbReference type="ChEBI" id="CHEBI:15377"/>
        <dbReference type="ChEBI" id="CHEBI:15378"/>
        <dbReference type="ChEBI" id="CHEBI:32551"/>
        <dbReference type="ChEBI" id="CHEBI:57783"/>
        <dbReference type="ChEBI" id="CHEBI:58058"/>
        <dbReference type="ChEBI" id="CHEBI:58349"/>
        <dbReference type="EC" id="1.5.1.16"/>
    </reaction>
</comment>
<comment type="similarity">
    <text evidence="1">Belongs to the lysopine/nopaline/octopine/opine/vitopine dehydrogenases family.</text>
</comment>
<geneLocation type="plasmid">
    <name>pTiTM4</name>
</geneLocation>
<organism>
    <name type="scientific">Agrobacterium vitis</name>
    <name type="common">Rhizobium vitis</name>
    <dbReference type="NCBI Taxonomy" id="373"/>
    <lineage>
        <taxon>Bacteria</taxon>
        <taxon>Pseudomonadati</taxon>
        <taxon>Pseudomonadota</taxon>
        <taxon>Alphaproteobacteria</taxon>
        <taxon>Hyphomicrobiales</taxon>
        <taxon>Rhizobiaceae</taxon>
        <taxon>Rhizobium/Agrobacterium group</taxon>
        <taxon>Agrobacterium</taxon>
    </lineage>
</organism>
<accession>P94210</accession>
<feature type="chain" id="PRO_0000179980" description="Protein ocs">
    <location>
        <begin position="1"/>
        <end position="358"/>
    </location>
</feature>
<name>DHLO_AGRVI</name>
<dbReference type="EC" id="1.5.1.16"/>
<dbReference type="EC" id="1.5.1.11"/>
<dbReference type="EMBL" id="U83987">
    <property type="protein sequence ID" value="AAB41877.1"/>
    <property type="molecule type" value="Genomic_DNA"/>
</dbReference>
<dbReference type="RefSeq" id="WP_060718528.1">
    <property type="nucleotide sequence ID" value="NZ_WPHX01000055.1"/>
</dbReference>
<dbReference type="SMR" id="P94210"/>
<dbReference type="GeneID" id="60685092"/>
<dbReference type="OrthoDB" id="8295544at2"/>
<dbReference type="GO" id="GO:0047827">
    <property type="term" value="F:D-lysopine dehydrogenase activity"/>
    <property type="evidence" value="ECO:0007669"/>
    <property type="project" value="UniProtKB-EC"/>
</dbReference>
<dbReference type="GO" id="GO:0047830">
    <property type="term" value="F:D-octopine dehydrogenase activity"/>
    <property type="evidence" value="ECO:0007669"/>
    <property type="project" value="UniProtKB-EC"/>
</dbReference>
<dbReference type="Gene3D" id="1.10.1040.10">
    <property type="entry name" value="N-(1-d-carboxylethyl)-l-norvaline Dehydrogenase, domain 2"/>
    <property type="match status" value="1"/>
</dbReference>
<dbReference type="Gene3D" id="3.40.50.720">
    <property type="entry name" value="NAD(P)-binding Rossmann-like Domain"/>
    <property type="match status" value="1"/>
</dbReference>
<dbReference type="InterPro" id="IPR008927">
    <property type="entry name" value="6-PGluconate_DH-like_C_sf"/>
</dbReference>
<dbReference type="InterPro" id="IPR013328">
    <property type="entry name" value="6PGD_dom2"/>
</dbReference>
<dbReference type="InterPro" id="IPR036291">
    <property type="entry name" value="NAD(P)-bd_dom_sf"/>
</dbReference>
<dbReference type="InterPro" id="IPR051729">
    <property type="entry name" value="Opine/Lysopine_DH"/>
</dbReference>
<dbReference type="InterPro" id="IPR003421">
    <property type="entry name" value="Opine_DH"/>
</dbReference>
<dbReference type="PANTHER" id="PTHR38015">
    <property type="entry name" value="BLR6086 PROTEIN"/>
    <property type="match status" value="1"/>
</dbReference>
<dbReference type="PANTHER" id="PTHR38015:SF1">
    <property type="entry name" value="OPINE DEHYDROGENASE DOMAIN-CONTAINING PROTEIN"/>
    <property type="match status" value="1"/>
</dbReference>
<dbReference type="Pfam" id="PF02317">
    <property type="entry name" value="Octopine_DH"/>
    <property type="match status" value="1"/>
</dbReference>
<dbReference type="SUPFAM" id="SSF48179">
    <property type="entry name" value="6-phosphogluconate dehydrogenase C-terminal domain-like"/>
    <property type="match status" value="1"/>
</dbReference>
<dbReference type="SUPFAM" id="SSF51735">
    <property type="entry name" value="NAD(P)-binding Rossmann-fold domains"/>
    <property type="match status" value="1"/>
</dbReference>